<name>UPP_CAMJJ</name>
<organism>
    <name type="scientific">Campylobacter jejuni subsp. jejuni serotype O:23/36 (strain 81-176)</name>
    <dbReference type="NCBI Taxonomy" id="354242"/>
    <lineage>
        <taxon>Bacteria</taxon>
        <taxon>Pseudomonadati</taxon>
        <taxon>Campylobacterota</taxon>
        <taxon>Epsilonproteobacteria</taxon>
        <taxon>Campylobacterales</taxon>
        <taxon>Campylobacteraceae</taxon>
        <taxon>Campylobacter</taxon>
    </lineage>
</organism>
<accession>A1W0S0</accession>
<comment type="function">
    <text evidence="1">Catalyzes the conversion of uracil and 5-phospho-alpha-D-ribose 1-diphosphate (PRPP) to UMP and diphosphate.</text>
</comment>
<comment type="catalytic activity">
    <reaction evidence="1">
        <text>UMP + diphosphate = 5-phospho-alpha-D-ribose 1-diphosphate + uracil</text>
        <dbReference type="Rhea" id="RHEA:13017"/>
        <dbReference type="ChEBI" id="CHEBI:17568"/>
        <dbReference type="ChEBI" id="CHEBI:33019"/>
        <dbReference type="ChEBI" id="CHEBI:57865"/>
        <dbReference type="ChEBI" id="CHEBI:58017"/>
        <dbReference type="EC" id="2.4.2.9"/>
    </reaction>
</comment>
<comment type="cofactor">
    <cofactor evidence="1">
        <name>Mg(2+)</name>
        <dbReference type="ChEBI" id="CHEBI:18420"/>
    </cofactor>
    <text evidence="1">Binds 1 Mg(2+) ion per subunit. The magnesium is bound as Mg-PRPP.</text>
</comment>
<comment type="activity regulation">
    <text evidence="1">Allosterically activated by GTP.</text>
</comment>
<comment type="pathway">
    <text evidence="1">Pyrimidine metabolism; UMP biosynthesis via salvage pathway; UMP from uracil: step 1/1.</text>
</comment>
<comment type="similarity">
    <text evidence="1">Belongs to the UPRTase family.</text>
</comment>
<proteinExistence type="inferred from homology"/>
<dbReference type="EC" id="2.4.2.9" evidence="1"/>
<dbReference type="EMBL" id="CP000538">
    <property type="protein sequence ID" value="EAQ72919.1"/>
    <property type="molecule type" value="Genomic_DNA"/>
</dbReference>
<dbReference type="RefSeq" id="WP_002831283.1">
    <property type="nucleotide sequence ID" value="NC_008787.1"/>
</dbReference>
<dbReference type="SMR" id="A1W0S0"/>
<dbReference type="KEGG" id="cjj:CJJ81176_1303"/>
<dbReference type="eggNOG" id="COG0035">
    <property type="taxonomic scope" value="Bacteria"/>
</dbReference>
<dbReference type="HOGENOM" id="CLU_067096_2_2_7"/>
<dbReference type="UniPathway" id="UPA00574">
    <property type="reaction ID" value="UER00636"/>
</dbReference>
<dbReference type="Proteomes" id="UP000000646">
    <property type="component" value="Chromosome"/>
</dbReference>
<dbReference type="GO" id="GO:0005525">
    <property type="term" value="F:GTP binding"/>
    <property type="evidence" value="ECO:0007669"/>
    <property type="project" value="UniProtKB-KW"/>
</dbReference>
<dbReference type="GO" id="GO:0000287">
    <property type="term" value="F:magnesium ion binding"/>
    <property type="evidence" value="ECO:0007669"/>
    <property type="project" value="UniProtKB-UniRule"/>
</dbReference>
<dbReference type="GO" id="GO:0004845">
    <property type="term" value="F:uracil phosphoribosyltransferase activity"/>
    <property type="evidence" value="ECO:0007669"/>
    <property type="project" value="UniProtKB-UniRule"/>
</dbReference>
<dbReference type="GO" id="GO:0044206">
    <property type="term" value="P:UMP salvage"/>
    <property type="evidence" value="ECO:0007669"/>
    <property type="project" value="UniProtKB-UniRule"/>
</dbReference>
<dbReference type="GO" id="GO:0006223">
    <property type="term" value="P:uracil salvage"/>
    <property type="evidence" value="ECO:0007669"/>
    <property type="project" value="InterPro"/>
</dbReference>
<dbReference type="CDD" id="cd06223">
    <property type="entry name" value="PRTases_typeI"/>
    <property type="match status" value="1"/>
</dbReference>
<dbReference type="FunFam" id="3.40.50.2020:FF:000003">
    <property type="entry name" value="Uracil phosphoribosyltransferase"/>
    <property type="match status" value="1"/>
</dbReference>
<dbReference type="Gene3D" id="3.40.50.2020">
    <property type="match status" value="1"/>
</dbReference>
<dbReference type="HAMAP" id="MF_01218_B">
    <property type="entry name" value="Upp_B"/>
    <property type="match status" value="1"/>
</dbReference>
<dbReference type="InterPro" id="IPR000836">
    <property type="entry name" value="PRibTrfase_dom"/>
</dbReference>
<dbReference type="InterPro" id="IPR029057">
    <property type="entry name" value="PRTase-like"/>
</dbReference>
<dbReference type="InterPro" id="IPR034332">
    <property type="entry name" value="Upp_B"/>
</dbReference>
<dbReference type="InterPro" id="IPR050054">
    <property type="entry name" value="UPRTase/APRTase"/>
</dbReference>
<dbReference type="InterPro" id="IPR005765">
    <property type="entry name" value="Ura_phspho_trans"/>
</dbReference>
<dbReference type="NCBIfam" id="NF001097">
    <property type="entry name" value="PRK00129.1"/>
    <property type="match status" value="1"/>
</dbReference>
<dbReference type="NCBIfam" id="TIGR01091">
    <property type="entry name" value="upp"/>
    <property type="match status" value="1"/>
</dbReference>
<dbReference type="PANTHER" id="PTHR32315">
    <property type="entry name" value="ADENINE PHOSPHORIBOSYLTRANSFERASE"/>
    <property type="match status" value="1"/>
</dbReference>
<dbReference type="PANTHER" id="PTHR32315:SF4">
    <property type="entry name" value="URACIL PHOSPHORIBOSYLTRANSFERASE, CHLOROPLASTIC"/>
    <property type="match status" value="1"/>
</dbReference>
<dbReference type="Pfam" id="PF14681">
    <property type="entry name" value="UPRTase"/>
    <property type="match status" value="1"/>
</dbReference>
<dbReference type="SUPFAM" id="SSF53271">
    <property type="entry name" value="PRTase-like"/>
    <property type="match status" value="1"/>
</dbReference>
<reference key="1">
    <citation type="submission" date="2006-12" db="EMBL/GenBank/DDBJ databases">
        <authorList>
            <person name="Fouts D.E."/>
            <person name="Nelson K.E."/>
            <person name="Sebastian Y."/>
        </authorList>
    </citation>
    <scope>NUCLEOTIDE SEQUENCE [LARGE SCALE GENOMIC DNA]</scope>
    <source>
        <strain>81-176</strain>
    </source>
</reference>
<evidence type="ECO:0000255" key="1">
    <source>
        <dbReference type="HAMAP-Rule" id="MF_01218"/>
    </source>
</evidence>
<protein>
    <recommendedName>
        <fullName evidence="1">Uracil phosphoribosyltransferase</fullName>
        <ecNumber evidence="1">2.4.2.9</ecNumber>
    </recommendedName>
    <alternativeName>
        <fullName evidence="1">UMP pyrophosphorylase</fullName>
    </alternativeName>
    <alternativeName>
        <fullName evidence="1">UPRTase</fullName>
    </alternativeName>
</protein>
<gene>
    <name evidence="1" type="primary">upp</name>
    <name type="ordered locus">CJJ81176_1303</name>
</gene>
<keyword id="KW-0021">Allosteric enzyme</keyword>
<keyword id="KW-0328">Glycosyltransferase</keyword>
<keyword id="KW-0342">GTP-binding</keyword>
<keyword id="KW-0460">Magnesium</keyword>
<keyword id="KW-0547">Nucleotide-binding</keyword>
<keyword id="KW-0808">Transferase</keyword>
<sequence>MKNIHCINHPLIEHKLGILRAKETKPFQFRMLIDEISSFLLFEASKDFSLKEIEISTPIQKTTVKKLDEKIMICPILRAALGMLESVFKMIPDASVGFLGFVRNEETLKADFYFQKLPKDAKKRTAIVIDPMFATGGTAIEACNFLKSQGVKKIKFISILAAPQGLKKFSQMHDDVEVFVACIDEGLNEKGYIIPGLGDAGDRVFNTL</sequence>
<feature type="chain" id="PRO_1000053697" description="Uracil phosphoribosyltransferase">
    <location>
        <begin position="1"/>
        <end position="208"/>
    </location>
</feature>
<feature type="binding site" evidence="1">
    <location>
        <position position="78"/>
    </location>
    <ligand>
        <name>5-phospho-alpha-D-ribose 1-diphosphate</name>
        <dbReference type="ChEBI" id="CHEBI:58017"/>
    </ligand>
</feature>
<feature type="binding site" evidence="1">
    <location>
        <position position="103"/>
    </location>
    <ligand>
        <name>5-phospho-alpha-D-ribose 1-diphosphate</name>
        <dbReference type="ChEBI" id="CHEBI:58017"/>
    </ligand>
</feature>
<feature type="binding site" evidence="1">
    <location>
        <begin position="130"/>
        <end position="138"/>
    </location>
    <ligand>
        <name>5-phospho-alpha-D-ribose 1-diphosphate</name>
        <dbReference type="ChEBI" id="CHEBI:58017"/>
    </ligand>
</feature>
<feature type="binding site" evidence="1">
    <location>
        <position position="193"/>
    </location>
    <ligand>
        <name>uracil</name>
        <dbReference type="ChEBI" id="CHEBI:17568"/>
    </ligand>
</feature>
<feature type="binding site" evidence="1">
    <location>
        <begin position="198"/>
        <end position="200"/>
    </location>
    <ligand>
        <name>uracil</name>
        <dbReference type="ChEBI" id="CHEBI:17568"/>
    </ligand>
</feature>
<feature type="binding site" evidence="1">
    <location>
        <position position="199"/>
    </location>
    <ligand>
        <name>5-phospho-alpha-D-ribose 1-diphosphate</name>
        <dbReference type="ChEBI" id="CHEBI:58017"/>
    </ligand>
</feature>